<name>NRDR_STRZJ</name>
<evidence type="ECO:0000255" key="1">
    <source>
        <dbReference type="HAMAP-Rule" id="MF_00440"/>
    </source>
</evidence>
<evidence type="ECO:0000256" key="2">
    <source>
        <dbReference type="SAM" id="MobiDB-lite"/>
    </source>
</evidence>
<accession>C1CFT4</accession>
<keyword id="KW-0067">ATP-binding</keyword>
<keyword id="KW-0238">DNA-binding</keyword>
<keyword id="KW-0479">Metal-binding</keyword>
<keyword id="KW-0547">Nucleotide-binding</keyword>
<keyword id="KW-0678">Repressor</keyword>
<keyword id="KW-0804">Transcription</keyword>
<keyword id="KW-0805">Transcription regulation</keyword>
<keyword id="KW-0862">Zinc</keyword>
<keyword id="KW-0863">Zinc-finger</keyword>
<feature type="chain" id="PRO_1000191818" description="Transcriptional repressor NrdR">
    <location>
        <begin position="1"/>
        <end position="157"/>
    </location>
</feature>
<feature type="domain" description="ATP-cone" evidence="1">
    <location>
        <begin position="49"/>
        <end position="139"/>
    </location>
</feature>
<feature type="zinc finger region" evidence="1">
    <location>
        <begin position="3"/>
        <end position="34"/>
    </location>
</feature>
<feature type="region of interest" description="Disordered" evidence="2">
    <location>
        <begin position="1"/>
        <end position="22"/>
    </location>
</feature>
<sequence>MRCPKCGATKSSVIDSRQAEEGNTIRRRRECDECQHRFTTYERVEERTLVVVKKDGTREQFSRDKIFNGIIRSAQKRPVSSDEINMVVNRIEQKLRGRNENEIQSEDIGSLVMEELAELDEITYVRFASVYRSFKDVSELESLLQQITQSSKKKKER</sequence>
<protein>
    <recommendedName>
        <fullName evidence="1">Transcriptional repressor NrdR</fullName>
    </recommendedName>
</protein>
<comment type="function">
    <text evidence="1">Negatively regulates transcription of bacterial ribonucleotide reductase nrd genes and operons by binding to NrdR-boxes.</text>
</comment>
<comment type="cofactor">
    <cofactor evidence="1">
        <name>Zn(2+)</name>
        <dbReference type="ChEBI" id="CHEBI:29105"/>
    </cofactor>
    <text evidence="1">Binds 1 zinc ion.</text>
</comment>
<comment type="similarity">
    <text evidence="1">Belongs to the NrdR family.</text>
</comment>
<proteinExistence type="inferred from homology"/>
<reference key="1">
    <citation type="journal article" date="2010" name="Genome Biol.">
        <title>Structure and dynamics of the pan-genome of Streptococcus pneumoniae and closely related species.</title>
        <authorList>
            <person name="Donati C."/>
            <person name="Hiller N.L."/>
            <person name="Tettelin H."/>
            <person name="Muzzi A."/>
            <person name="Croucher N.J."/>
            <person name="Angiuoli S.V."/>
            <person name="Oggioni M."/>
            <person name="Dunning Hotopp J.C."/>
            <person name="Hu F.Z."/>
            <person name="Riley D.R."/>
            <person name="Covacci A."/>
            <person name="Mitchell T.J."/>
            <person name="Bentley S.D."/>
            <person name="Kilian M."/>
            <person name="Ehrlich G.D."/>
            <person name="Rappuoli R."/>
            <person name="Moxon E.R."/>
            <person name="Masignani V."/>
        </authorList>
    </citation>
    <scope>NUCLEOTIDE SEQUENCE [LARGE SCALE GENOMIC DNA]</scope>
    <source>
        <strain>JJA</strain>
    </source>
</reference>
<gene>
    <name evidence="1" type="primary">nrdR</name>
    <name type="ordered locus">SPJ_1608</name>
</gene>
<organism>
    <name type="scientific">Streptococcus pneumoniae (strain JJA)</name>
    <dbReference type="NCBI Taxonomy" id="488222"/>
    <lineage>
        <taxon>Bacteria</taxon>
        <taxon>Bacillati</taxon>
        <taxon>Bacillota</taxon>
        <taxon>Bacilli</taxon>
        <taxon>Lactobacillales</taxon>
        <taxon>Streptococcaceae</taxon>
        <taxon>Streptococcus</taxon>
    </lineage>
</organism>
<dbReference type="EMBL" id="CP000919">
    <property type="protein sequence ID" value="ACO18475.1"/>
    <property type="molecule type" value="Genomic_DNA"/>
</dbReference>
<dbReference type="RefSeq" id="WP_001203672.1">
    <property type="nucleotide sequence ID" value="NC_012466.1"/>
</dbReference>
<dbReference type="SMR" id="C1CFT4"/>
<dbReference type="GeneID" id="93740109"/>
<dbReference type="KEGG" id="sjj:SPJ_1608"/>
<dbReference type="HOGENOM" id="CLU_108412_0_0_9"/>
<dbReference type="Proteomes" id="UP000002206">
    <property type="component" value="Chromosome"/>
</dbReference>
<dbReference type="GO" id="GO:0005524">
    <property type="term" value="F:ATP binding"/>
    <property type="evidence" value="ECO:0007669"/>
    <property type="project" value="UniProtKB-KW"/>
</dbReference>
<dbReference type="GO" id="GO:0003677">
    <property type="term" value="F:DNA binding"/>
    <property type="evidence" value="ECO:0007669"/>
    <property type="project" value="UniProtKB-KW"/>
</dbReference>
<dbReference type="GO" id="GO:0008270">
    <property type="term" value="F:zinc ion binding"/>
    <property type="evidence" value="ECO:0007669"/>
    <property type="project" value="UniProtKB-UniRule"/>
</dbReference>
<dbReference type="GO" id="GO:0045892">
    <property type="term" value="P:negative regulation of DNA-templated transcription"/>
    <property type="evidence" value="ECO:0007669"/>
    <property type="project" value="UniProtKB-UniRule"/>
</dbReference>
<dbReference type="HAMAP" id="MF_00440">
    <property type="entry name" value="NrdR"/>
    <property type="match status" value="1"/>
</dbReference>
<dbReference type="InterPro" id="IPR005144">
    <property type="entry name" value="ATP-cone_dom"/>
</dbReference>
<dbReference type="InterPro" id="IPR055173">
    <property type="entry name" value="NrdR-like_N"/>
</dbReference>
<dbReference type="InterPro" id="IPR003796">
    <property type="entry name" value="RNR_NrdR-like"/>
</dbReference>
<dbReference type="NCBIfam" id="TIGR00244">
    <property type="entry name" value="transcriptional regulator NrdR"/>
    <property type="match status" value="1"/>
</dbReference>
<dbReference type="PANTHER" id="PTHR30455">
    <property type="entry name" value="TRANSCRIPTIONAL REPRESSOR NRDR"/>
    <property type="match status" value="1"/>
</dbReference>
<dbReference type="PANTHER" id="PTHR30455:SF2">
    <property type="entry name" value="TRANSCRIPTIONAL REPRESSOR NRDR"/>
    <property type="match status" value="1"/>
</dbReference>
<dbReference type="Pfam" id="PF03477">
    <property type="entry name" value="ATP-cone"/>
    <property type="match status" value="1"/>
</dbReference>
<dbReference type="Pfam" id="PF22811">
    <property type="entry name" value="Zn_ribbon_NrdR"/>
    <property type="match status" value="1"/>
</dbReference>
<dbReference type="PROSITE" id="PS51161">
    <property type="entry name" value="ATP_CONE"/>
    <property type="match status" value="1"/>
</dbReference>